<proteinExistence type="inferred from homology"/>
<name>QCR8_RAT</name>
<evidence type="ECO:0000250" key="1">
    <source>
        <dbReference type="UniProtKB" id="O14949"/>
    </source>
</evidence>
<evidence type="ECO:0000250" key="2">
    <source>
        <dbReference type="UniProtKB" id="P08525"/>
    </source>
</evidence>
<evidence type="ECO:0000250" key="3">
    <source>
        <dbReference type="UniProtKB" id="P13271"/>
    </source>
</evidence>
<evidence type="ECO:0000250" key="4">
    <source>
        <dbReference type="UniProtKB" id="Q9CQ69"/>
    </source>
</evidence>
<evidence type="ECO:0000305" key="5"/>
<sequence length="82" mass="9849">MGREFGNLTRIRHVISYSLSPFEQRAFPHYFSKGIPNVLRRTRERILRVAPPFVLFYLIYTWGNQEFAQSKRKNPAKYENDK</sequence>
<feature type="chain" id="PRO_0000346788" description="Cytochrome b-c1 complex subunit 8">
    <location>
        <begin position="1"/>
        <end position="82"/>
    </location>
</feature>
<feature type="topological domain" description="Mitochondrial matrix" evidence="3">
    <location>
        <begin position="1"/>
        <end position="39"/>
    </location>
</feature>
<feature type="transmembrane region" description="Helical" evidence="3">
    <location>
        <begin position="40"/>
        <end position="68"/>
    </location>
</feature>
<feature type="topological domain" description="Mitochondrial intermembrane" evidence="3">
    <location>
        <begin position="69"/>
        <end position="82"/>
    </location>
</feature>
<feature type="modified residue" description="Phosphoserine" evidence="1">
    <location>
        <position position="16"/>
    </location>
</feature>
<feature type="modified residue" description="N6-acetyllysine; alternate" evidence="4">
    <location>
        <position position="33"/>
    </location>
</feature>
<feature type="modified residue" description="N6-succinyllysine; alternate" evidence="4">
    <location>
        <position position="33"/>
    </location>
</feature>
<keyword id="KW-0007">Acetylation</keyword>
<keyword id="KW-0249">Electron transport</keyword>
<keyword id="KW-0472">Membrane</keyword>
<keyword id="KW-0496">Mitochondrion</keyword>
<keyword id="KW-0999">Mitochondrion inner membrane</keyword>
<keyword id="KW-0597">Phosphoprotein</keyword>
<keyword id="KW-1185">Reference proteome</keyword>
<keyword id="KW-0679">Respiratory chain</keyword>
<keyword id="KW-0812">Transmembrane</keyword>
<keyword id="KW-1133">Transmembrane helix</keyword>
<keyword id="KW-0813">Transport</keyword>
<organism>
    <name type="scientific">Rattus norvegicus</name>
    <name type="common">Rat</name>
    <dbReference type="NCBI Taxonomy" id="10116"/>
    <lineage>
        <taxon>Eukaryota</taxon>
        <taxon>Metazoa</taxon>
        <taxon>Chordata</taxon>
        <taxon>Craniata</taxon>
        <taxon>Vertebrata</taxon>
        <taxon>Euteleostomi</taxon>
        <taxon>Mammalia</taxon>
        <taxon>Eutheria</taxon>
        <taxon>Euarchontoglires</taxon>
        <taxon>Glires</taxon>
        <taxon>Rodentia</taxon>
        <taxon>Myomorpha</taxon>
        <taxon>Muroidea</taxon>
        <taxon>Muridae</taxon>
        <taxon>Murinae</taxon>
        <taxon>Rattus</taxon>
    </lineage>
</organism>
<reference key="1">
    <citation type="submission" date="2003-06" db="EMBL/GenBank/DDBJ databases">
        <authorList>
            <person name="Shan Y.X."/>
            <person name="Yu L."/>
        </authorList>
    </citation>
    <scope>NUCLEOTIDE SEQUENCE [MRNA]</scope>
    <source>
        <strain>Sprague-Dawley</strain>
    </source>
</reference>
<comment type="function">
    <text evidence="2">Component of the ubiquinol-cytochrome c oxidoreductase, a multisubunit transmembrane complex that is part of the mitochondrial electron transport chain which drives oxidative phosphorylation. The respiratory chain contains 3 multisubunit complexes succinate dehydrogenase (complex II, CII), ubiquinol-cytochrome c oxidoreductase (cytochrome b-c1 complex, complex III, CIII) and cytochrome c oxidase (complex IV, CIV), that cooperate to transfer electrons derived from NADH and succinate to molecular oxygen, creating an electrochemical gradient over the inner membrane that drives transmembrane transport and the ATP synthase. The cytochrome b-c1 complex catalyzes electron transfer from ubiquinol to cytochrome c, linking this redox reaction to translocation of protons across the mitochondrial inner membrane, with protons being carried across the membrane as hydrogens on the quinol. In the process called Q cycle, 2 protons are consumed from the matrix, 4 protons are released into the intermembrane space and 2 electrons are passed to cytochrome c.</text>
</comment>
<comment type="subunit">
    <text evidence="1 3 4">Component of the ubiquinol-cytochrome c oxidoreductase (cytochrome b-c1 complex, complex III, CIII), a multisubunit enzyme composed of 11 subunits. The complex is composed of 3 respiratory subunits cytochrome b, cytochrome c1 and Rieske protein UQCRFS1, 2 core protein subunits UQCRC1/QCR1 and UQCRC2/QCR2, and 6 low-molecular weight protein subunits UQCRH/QCR6, UQCRB/QCR7, UQCRQ/QCR8, UQCR10/QCR9, UQCR11/QCR10 and subunit 9, the cleavage product of Rieske protein UQCRFS1 (By similarity). The complex exists as an obligatory dimer and forms supercomplexes (SCs) in the inner mitochondrial membrane with NADH-ubiquinone oxidoreductase (complex I, CI) and cytochrome c oxidase (complex IV, CIV), resulting in different assemblies (supercomplex SCI(1)III(2)IV(1) and megacomplex MCI(2)III(2)IV(2)) (By similarity). Interacts with UQCC6 (By similarity).</text>
</comment>
<comment type="subcellular location">
    <subcellularLocation>
        <location evidence="2">Mitochondrion inner membrane</location>
        <topology evidence="2">Single-pass membrane protein</topology>
    </subcellularLocation>
</comment>
<comment type="similarity">
    <text evidence="5">Belongs to the UQCRQ/QCR8 family.</text>
</comment>
<gene>
    <name type="primary">Uqcrq</name>
    <name type="synonym">Qpc</name>
</gene>
<accession>Q7TQ16</accession>
<dbReference type="EMBL" id="AY323237">
    <property type="protein sequence ID" value="AAP84717.1"/>
    <property type="molecule type" value="mRNA"/>
</dbReference>
<dbReference type="RefSeq" id="NP_001020305.1">
    <property type="nucleotide sequence ID" value="NM_001025134.1"/>
</dbReference>
<dbReference type="RefSeq" id="XP_006246378.1">
    <property type="nucleotide sequence ID" value="XM_006246316.5"/>
</dbReference>
<dbReference type="SMR" id="Q7TQ16"/>
<dbReference type="BioGRID" id="269212">
    <property type="interactions" value="3"/>
</dbReference>
<dbReference type="CORUM" id="Q7TQ16"/>
<dbReference type="FunCoup" id="Q7TQ16">
    <property type="interactions" value="1604"/>
</dbReference>
<dbReference type="IntAct" id="Q7TQ16">
    <property type="interactions" value="3"/>
</dbReference>
<dbReference type="MINT" id="Q7TQ16"/>
<dbReference type="STRING" id="10116.ENSRNOP00000065074"/>
<dbReference type="GlyGen" id="Q7TQ16">
    <property type="glycosylation" value="1 site, 1 O-linked glycan (1 site)"/>
</dbReference>
<dbReference type="iPTMnet" id="Q7TQ16"/>
<dbReference type="PhosphoSitePlus" id="Q7TQ16"/>
<dbReference type="SwissPalm" id="Q7TQ16"/>
<dbReference type="jPOST" id="Q7TQ16"/>
<dbReference type="PaxDb" id="10116-ENSRNOP00000065074"/>
<dbReference type="Ensembl" id="ENSRNOT00000100770.1">
    <property type="protein sequence ID" value="ENSRNOP00000089793.1"/>
    <property type="gene ID" value="ENSRNOG00000067979.1"/>
</dbReference>
<dbReference type="GeneID" id="497902"/>
<dbReference type="KEGG" id="rno:497902"/>
<dbReference type="UCSC" id="RGD:1562350">
    <property type="organism name" value="rat"/>
</dbReference>
<dbReference type="AGR" id="RGD:1562350"/>
<dbReference type="CTD" id="27089"/>
<dbReference type="RGD" id="1562350">
    <property type="gene designation" value="Uqcrq"/>
</dbReference>
<dbReference type="eggNOG" id="KOG4116">
    <property type="taxonomic scope" value="Eukaryota"/>
</dbReference>
<dbReference type="GeneTree" id="ENSGT00390000004029"/>
<dbReference type="HOGENOM" id="CLU_156007_2_0_1"/>
<dbReference type="InParanoid" id="Q7TQ16"/>
<dbReference type="OMA" id="MWRRFKG"/>
<dbReference type="PhylomeDB" id="Q7TQ16"/>
<dbReference type="TreeFam" id="TF300281"/>
<dbReference type="Reactome" id="R-RNO-611105">
    <property type="pathway name" value="Respiratory electron transport"/>
</dbReference>
<dbReference type="Reactome" id="R-RNO-9837999">
    <property type="pathway name" value="Mitochondrial protein degradation"/>
</dbReference>
<dbReference type="Reactome" id="R-RNO-9865881">
    <property type="pathway name" value="Complex III assembly"/>
</dbReference>
<dbReference type="PRO" id="PR:Q7TQ16"/>
<dbReference type="Proteomes" id="UP000002494">
    <property type="component" value="Chromosome 10"/>
</dbReference>
<dbReference type="Bgee" id="ENSRNOG00000048174">
    <property type="expression patterns" value="Expressed in heart and 20 other cell types or tissues"/>
</dbReference>
<dbReference type="GO" id="GO:0005743">
    <property type="term" value="C:mitochondrial inner membrane"/>
    <property type="evidence" value="ECO:0000266"/>
    <property type="project" value="RGD"/>
</dbReference>
<dbReference type="GO" id="GO:0005739">
    <property type="term" value="C:mitochondrion"/>
    <property type="evidence" value="ECO:0000266"/>
    <property type="project" value="RGD"/>
</dbReference>
<dbReference type="GO" id="GO:0045275">
    <property type="term" value="C:respiratory chain complex III"/>
    <property type="evidence" value="ECO:0000266"/>
    <property type="project" value="RGD"/>
</dbReference>
<dbReference type="GO" id="GO:0021680">
    <property type="term" value="P:cerebellar Purkinje cell layer development"/>
    <property type="evidence" value="ECO:0000266"/>
    <property type="project" value="RGD"/>
</dbReference>
<dbReference type="GO" id="GO:0021766">
    <property type="term" value="P:hippocampus development"/>
    <property type="evidence" value="ECO:0000266"/>
    <property type="project" value="RGD"/>
</dbReference>
<dbReference type="GO" id="GO:0021854">
    <property type="term" value="P:hypothalamus development"/>
    <property type="evidence" value="ECO:0000266"/>
    <property type="project" value="RGD"/>
</dbReference>
<dbReference type="GO" id="GO:0030901">
    <property type="term" value="P:midbrain development"/>
    <property type="evidence" value="ECO:0000266"/>
    <property type="project" value="RGD"/>
</dbReference>
<dbReference type="GO" id="GO:0006122">
    <property type="term" value="P:mitochondrial electron transport, ubiquinol to cytochrome c"/>
    <property type="evidence" value="ECO:0000318"/>
    <property type="project" value="GO_Central"/>
</dbReference>
<dbReference type="GO" id="GO:0021548">
    <property type="term" value="P:pons development"/>
    <property type="evidence" value="ECO:0000266"/>
    <property type="project" value="RGD"/>
</dbReference>
<dbReference type="GO" id="GO:0021860">
    <property type="term" value="P:pyramidal neuron development"/>
    <property type="evidence" value="ECO:0000266"/>
    <property type="project" value="RGD"/>
</dbReference>
<dbReference type="GO" id="GO:0021539">
    <property type="term" value="P:subthalamus development"/>
    <property type="evidence" value="ECO:0000266"/>
    <property type="project" value="RGD"/>
</dbReference>
<dbReference type="GO" id="GO:0021794">
    <property type="term" value="P:thalamus development"/>
    <property type="evidence" value="ECO:0000266"/>
    <property type="project" value="RGD"/>
</dbReference>
<dbReference type="FunFam" id="1.20.5.210:FF:000001">
    <property type="entry name" value="Cytochrome b-c1 complex subunit 8"/>
    <property type="match status" value="1"/>
</dbReference>
<dbReference type="Gene3D" id="1.20.5.210">
    <property type="entry name" value="Cytochrome b-c1 complex subunit 8"/>
    <property type="match status" value="1"/>
</dbReference>
<dbReference type="InterPro" id="IPR004205">
    <property type="entry name" value="Cyt_bc1_su8"/>
</dbReference>
<dbReference type="InterPro" id="IPR036642">
    <property type="entry name" value="Cyt_bc1_su8_sf"/>
</dbReference>
<dbReference type="PANTHER" id="PTHR12119:SF2">
    <property type="entry name" value="CYTOCHROME B-C1 COMPLEX SUBUNIT 8"/>
    <property type="match status" value="1"/>
</dbReference>
<dbReference type="PANTHER" id="PTHR12119">
    <property type="entry name" value="UBIQUINOL-CYTOCHROME C REDUCTASE COMPLEX UBIQUINONE-BINDING PROTEIN QP-C"/>
    <property type="match status" value="1"/>
</dbReference>
<dbReference type="Pfam" id="PF02939">
    <property type="entry name" value="UcrQ"/>
    <property type="match status" value="1"/>
</dbReference>
<dbReference type="SUPFAM" id="SSF81508">
    <property type="entry name" value="Ubiquinone-binding protein QP-C of cytochrome bc1 complex (Ubiquinol-cytochrome c reductase)"/>
    <property type="match status" value="1"/>
</dbReference>
<protein>
    <recommendedName>
        <fullName>Cytochrome b-c1 complex subunit 8</fullName>
    </recommendedName>
    <alternativeName>
        <fullName>Complex III subunit 8</fullName>
    </alternativeName>
    <alternativeName>
        <fullName>Complex III subunit VIII</fullName>
    </alternativeName>
    <alternativeName>
        <fullName>Low molecular mass ubiquinone-binding protein</fullName>
    </alternativeName>
    <alternativeName>
        <fullName>Ubiquinol-cytochrome c reductase complex 9.5 kDa protein</fullName>
    </alternativeName>
    <alternativeName>
        <fullName>Ubiquinol-cytochrome c reductase complex ubiquinone-binding protein QP-C</fullName>
    </alternativeName>
</protein>